<proteinExistence type="inferred from homology"/>
<dbReference type="EMBL" id="BX571856">
    <property type="protein sequence ID" value="CAG40073.1"/>
    <property type="molecule type" value="Genomic_DNA"/>
</dbReference>
<dbReference type="RefSeq" id="WP_000455584.1">
    <property type="nucleotide sequence ID" value="NC_002952.2"/>
</dbReference>
<dbReference type="SMR" id="Q6GHY8"/>
<dbReference type="KEGG" id="sar:SAR1071"/>
<dbReference type="HOGENOM" id="CLU_166693_0_0_9"/>
<dbReference type="Proteomes" id="UP000000596">
    <property type="component" value="Chromosome"/>
</dbReference>
<dbReference type="Gene3D" id="1.10.220.80">
    <property type="entry name" value="BH2638-like"/>
    <property type="match status" value="1"/>
</dbReference>
<dbReference type="HAMAP" id="MF_01041">
    <property type="entry name" value="UPF0223"/>
    <property type="match status" value="1"/>
</dbReference>
<dbReference type="InterPro" id="IPR023324">
    <property type="entry name" value="BH2638-like_sf"/>
</dbReference>
<dbReference type="InterPro" id="IPR007920">
    <property type="entry name" value="UPF0223"/>
</dbReference>
<dbReference type="NCBIfam" id="NF003353">
    <property type="entry name" value="PRK04387.1"/>
    <property type="match status" value="1"/>
</dbReference>
<dbReference type="Pfam" id="PF05256">
    <property type="entry name" value="UPF0223"/>
    <property type="match status" value="1"/>
</dbReference>
<dbReference type="PIRSF" id="PIRSF037260">
    <property type="entry name" value="UPF0223"/>
    <property type="match status" value="1"/>
</dbReference>
<dbReference type="SUPFAM" id="SSF158504">
    <property type="entry name" value="BH2638-like"/>
    <property type="match status" value="1"/>
</dbReference>
<reference key="1">
    <citation type="journal article" date="2004" name="Proc. Natl. Acad. Sci. U.S.A.">
        <title>Complete genomes of two clinical Staphylococcus aureus strains: evidence for the rapid evolution of virulence and drug resistance.</title>
        <authorList>
            <person name="Holden M.T.G."/>
            <person name="Feil E.J."/>
            <person name="Lindsay J.A."/>
            <person name="Peacock S.J."/>
            <person name="Day N.P.J."/>
            <person name="Enright M.C."/>
            <person name="Foster T.J."/>
            <person name="Moore C.E."/>
            <person name="Hurst L."/>
            <person name="Atkin R."/>
            <person name="Barron A."/>
            <person name="Bason N."/>
            <person name="Bentley S.D."/>
            <person name="Chillingworth C."/>
            <person name="Chillingworth T."/>
            <person name="Churcher C."/>
            <person name="Clark L."/>
            <person name="Corton C."/>
            <person name="Cronin A."/>
            <person name="Doggett J."/>
            <person name="Dowd L."/>
            <person name="Feltwell T."/>
            <person name="Hance Z."/>
            <person name="Harris B."/>
            <person name="Hauser H."/>
            <person name="Holroyd S."/>
            <person name="Jagels K."/>
            <person name="James K.D."/>
            <person name="Lennard N."/>
            <person name="Line A."/>
            <person name="Mayes R."/>
            <person name="Moule S."/>
            <person name="Mungall K."/>
            <person name="Ormond D."/>
            <person name="Quail M.A."/>
            <person name="Rabbinowitsch E."/>
            <person name="Rutherford K.M."/>
            <person name="Sanders M."/>
            <person name="Sharp S."/>
            <person name="Simmonds M."/>
            <person name="Stevens K."/>
            <person name="Whitehead S."/>
            <person name="Barrell B.G."/>
            <person name="Spratt B.G."/>
            <person name="Parkhill J."/>
        </authorList>
    </citation>
    <scope>NUCLEOTIDE SEQUENCE [LARGE SCALE GENOMIC DNA]</scope>
    <source>
        <strain>MRSA252</strain>
    </source>
</reference>
<organism>
    <name type="scientific">Staphylococcus aureus (strain MRSA252)</name>
    <dbReference type="NCBI Taxonomy" id="282458"/>
    <lineage>
        <taxon>Bacteria</taxon>
        <taxon>Bacillati</taxon>
        <taxon>Bacillota</taxon>
        <taxon>Bacilli</taxon>
        <taxon>Bacillales</taxon>
        <taxon>Staphylococcaceae</taxon>
        <taxon>Staphylococcus</taxon>
    </lineage>
</organism>
<sequence length="91" mass="10776">MEYEYPIDLDWSNEEMILVINFFNHVEKYYESGVTAGDFMDAYKRFKEIVPAKAEEKQIFNTFEKSSGYNSYKAVQDVKTHSEEQRVTAKK</sequence>
<comment type="similarity">
    <text evidence="1">Belongs to the UPF0223 family.</text>
</comment>
<evidence type="ECO:0000255" key="1">
    <source>
        <dbReference type="HAMAP-Rule" id="MF_01041"/>
    </source>
</evidence>
<name>Y1071_STAAR</name>
<accession>Q6GHY8</accession>
<feature type="chain" id="PRO_0000216686" description="UPF0223 protein SAR1071">
    <location>
        <begin position="1"/>
        <end position="91"/>
    </location>
</feature>
<gene>
    <name type="ordered locus">SAR1071</name>
</gene>
<protein>
    <recommendedName>
        <fullName evidence="1">UPF0223 protein SAR1071</fullName>
    </recommendedName>
</protein>